<proteinExistence type="inferred from homology"/>
<organism>
    <name type="scientific">Methanococcus vannielii (strain ATCC 35089 / DSM 1224 / JCM 13029 / OCM 148 / SB)</name>
    <dbReference type="NCBI Taxonomy" id="406327"/>
    <lineage>
        <taxon>Archaea</taxon>
        <taxon>Methanobacteriati</taxon>
        <taxon>Methanobacteriota</taxon>
        <taxon>Methanomada group</taxon>
        <taxon>Methanococci</taxon>
        <taxon>Methanococcales</taxon>
        <taxon>Methanococcaceae</taxon>
        <taxon>Methanococcus</taxon>
    </lineage>
</organism>
<sequence length="284" mass="31656">MIRDTVVSGIFYPLEYHDLIEMIEYCYLNPRGPKKLPSKLGRYEKPIGVISPHAGYVYSGPIAAHSYKEISKKVSGNITAVIIGPNHSGMGSVVSTMEGIWKTPLGNLEIDNEFSERLWKECDIIDLDETAHLKEHSIEVQLPFLKHLELLNIAKFKFVPISMSLQDYDTAVGVGYMVAKVAKELNRKIIIIASSDFSHYEPEEIASKKDAIIIKDILKMEEEEIFTDVVTNNVTMCGYGPIIAMIKAMKVLGAKESKLLSYSTSGDVTKDYSEVVGYGALIIE</sequence>
<evidence type="ECO:0000255" key="1">
    <source>
        <dbReference type="HAMAP-Rule" id="MF_00055"/>
    </source>
</evidence>
<name>Y697_METVS</name>
<feature type="chain" id="PRO_1000003322" description="MEMO1 family protein Mevan_0697">
    <location>
        <begin position="1"/>
        <end position="284"/>
    </location>
</feature>
<reference key="1">
    <citation type="submission" date="2007-06" db="EMBL/GenBank/DDBJ databases">
        <title>Complete sequence of Methanococcus vannielii SB.</title>
        <authorList>
            <consortium name="US DOE Joint Genome Institute"/>
            <person name="Copeland A."/>
            <person name="Lucas S."/>
            <person name="Lapidus A."/>
            <person name="Barry K."/>
            <person name="Glavina del Rio T."/>
            <person name="Dalin E."/>
            <person name="Tice H."/>
            <person name="Pitluck S."/>
            <person name="Chain P."/>
            <person name="Malfatti S."/>
            <person name="Shin M."/>
            <person name="Vergez L."/>
            <person name="Schmutz J."/>
            <person name="Larimer F."/>
            <person name="Land M."/>
            <person name="Hauser L."/>
            <person name="Kyrpides N."/>
            <person name="Anderson I."/>
            <person name="Sieprawska-Lupa M."/>
            <person name="Whitman W.B."/>
            <person name="Richardson P."/>
        </authorList>
    </citation>
    <scope>NUCLEOTIDE SEQUENCE [LARGE SCALE GENOMIC DNA]</scope>
    <source>
        <strain>ATCC 35089 / DSM 1224 / JCM 13029 / OCM 148 / SB</strain>
    </source>
</reference>
<gene>
    <name type="ordered locus">Mevan_0697</name>
</gene>
<protein>
    <recommendedName>
        <fullName evidence="1">MEMO1 family protein Mevan_0697</fullName>
    </recommendedName>
</protein>
<dbReference type="EMBL" id="CP000742">
    <property type="protein sequence ID" value="ABR54603.1"/>
    <property type="molecule type" value="Genomic_DNA"/>
</dbReference>
<dbReference type="RefSeq" id="WP_011972505.1">
    <property type="nucleotide sequence ID" value="NC_009634.1"/>
</dbReference>
<dbReference type="SMR" id="A6UQ31"/>
<dbReference type="STRING" id="406327.Mevan_0697"/>
<dbReference type="GeneID" id="5324490"/>
<dbReference type="KEGG" id="mvn:Mevan_0697"/>
<dbReference type="eggNOG" id="arCOG01728">
    <property type="taxonomic scope" value="Archaea"/>
</dbReference>
<dbReference type="HOGENOM" id="CLU_038085_2_0_2"/>
<dbReference type="OrthoDB" id="372162at2157"/>
<dbReference type="Proteomes" id="UP000001107">
    <property type="component" value="Chromosome"/>
</dbReference>
<dbReference type="CDD" id="cd07361">
    <property type="entry name" value="MEMO_like"/>
    <property type="match status" value="1"/>
</dbReference>
<dbReference type="Gene3D" id="3.40.830.10">
    <property type="entry name" value="LigB-like"/>
    <property type="match status" value="1"/>
</dbReference>
<dbReference type="HAMAP" id="MF_00055">
    <property type="entry name" value="MEMO1"/>
    <property type="match status" value="1"/>
</dbReference>
<dbReference type="InterPro" id="IPR002737">
    <property type="entry name" value="MEMO1_fam"/>
</dbReference>
<dbReference type="NCBIfam" id="TIGR04336">
    <property type="entry name" value="AmmeMemoSam_B"/>
    <property type="match status" value="1"/>
</dbReference>
<dbReference type="NCBIfam" id="NF001987">
    <property type="entry name" value="PRK00782.1"/>
    <property type="match status" value="1"/>
</dbReference>
<dbReference type="PANTHER" id="PTHR11060">
    <property type="entry name" value="PROTEIN MEMO1"/>
    <property type="match status" value="1"/>
</dbReference>
<dbReference type="PANTHER" id="PTHR11060:SF0">
    <property type="entry name" value="PROTEIN MEMO1"/>
    <property type="match status" value="1"/>
</dbReference>
<dbReference type="Pfam" id="PF01875">
    <property type="entry name" value="Memo"/>
    <property type="match status" value="1"/>
</dbReference>
<accession>A6UQ31</accession>
<comment type="similarity">
    <text evidence="1">Belongs to the MEMO1 family.</text>
</comment>